<keyword id="KW-0007">Acetylation</keyword>
<keyword id="KW-0009">Actin-binding</keyword>
<keyword id="KW-0514">Muscle protein</keyword>
<keyword id="KW-0597">Phosphoprotein</keyword>
<keyword id="KW-1267">Proteomics identification</keyword>
<keyword id="KW-1185">Reference proteome</keyword>
<reference key="1">
    <citation type="journal article" date="1990" name="Genomics">
        <title>cDNA sequence, tissue-specific expression, and chromosomal mapping of the human slow-twitch skeletal muscle isoform of troponin I.</title>
        <authorList>
            <person name="Wade R."/>
            <person name="Eddy R."/>
            <person name="Shows T.B."/>
            <person name="Kedes L."/>
        </authorList>
    </citation>
    <scope>NUCLEOTIDE SEQUENCE [MRNA]</scope>
    <scope>TISSUE SPECIFICITY</scope>
    <source>
        <tissue>Skeletal muscle</tissue>
    </source>
</reference>
<reference key="2">
    <citation type="journal article" date="1994" name="J. Biol. Chem.">
        <title>Structure and expression of the human slow twitch skeletal muscle troponin I gene.</title>
        <authorList>
            <person name="Corin S.J."/>
            <person name="Juhasz O."/>
            <person name="Zhu L."/>
            <person name="Conley P."/>
            <person name="Kedes L."/>
            <person name="Wade R."/>
        </authorList>
    </citation>
    <scope>NUCLEOTIDE SEQUENCE [GENOMIC DNA]</scope>
    <scope>TISSUE SPECIFICITY</scope>
    <source>
        <tissue>Blood</tissue>
    </source>
</reference>
<reference key="3">
    <citation type="submission" date="2001-07" db="EMBL/GenBank/DDBJ databases">
        <title>Full length sequencing of some human and murine muscular transcripts (Telethon Italy project B41).</title>
        <authorList>
            <person name="Frigimelica E."/>
            <person name="Ievolella C."/>
            <person name="Lanfranchi G."/>
        </authorList>
    </citation>
    <scope>NUCLEOTIDE SEQUENCE [LARGE SCALE MRNA]</scope>
    <source>
        <tissue>Skeletal muscle</tissue>
    </source>
</reference>
<reference key="4">
    <citation type="submission" date="2004-06" db="EMBL/GenBank/DDBJ databases">
        <title>Cloning of human full open reading frames in Gateway(TM) system entry vector (pDONR201).</title>
        <authorList>
            <person name="Ebert L."/>
            <person name="Schick M."/>
            <person name="Neubert P."/>
            <person name="Schatten R."/>
            <person name="Henze S."/>
            <person name="Korn B."/>
        </authorList>
    </citation>
    <scope>NUCLEOTIDE SEQUENCE [LARGE SCALE MRNA]</scope>
</reference>
<reference key="5">
    <citation type="journal article" date="2007" name="BMC Genomics">
        <title>The full-ORF clone resource of the German cDNA consortium.</title>
        <authorList>
            <person name="Bechtel S."/>
            <person name="Rosenfelder H."/>
            <person name="Duda A."/>
            <person name="Schmidt C.P."/>
            <person name="Ernst U."/>
            <person name="Wellenreuther R."/>
            <person name="Mehrle A."/>
            <person name="Schuster C."/>
            <person name="Bahr A."/>
            <person name="Bloecker H."/>
            <person name="Heubner D."/>
            <person name="Hoerlein A."/>
            <person name="Michel G."/>
            <person name="Wedler H."/>
            <person name="Koehrer K."/>
            <person name="Ottenwaelder B."/>
            <person name="Poustka A."/>
            <person name="Wiemann S."/>
            <person name="Schupp I."/>
        </authorList>
    </citation>
    <scope>NUCLEOTIDE SEQUENCE [LARGE SCALE MRNA]</scope>
    <source>
        <tissue>Skeletal muscle</tissue>
    </source>
</reference>
<reference key="6">
    <citation type="submission" date="2005-04" db="EMBL/GenBank/DDBJ databases">
        <authorList>
            <person name="Totoki Y."/>
            <person name="Toyoda A."/>
            <person name="Takeda T."/>
            <person name="Sakaki Y."/>
            <person name="Tanaka A."/>
            <person name="Yokoyama S."/>
        </authorList>
    </citation>
    <scope>NUCLEOTIDE SEQUENCE [LARGE SCALE MRNA]</scope>
    <source>
        <tissue>Kidney</tissue>
    </source>
</reference>
<reference key="7">
    <citation type="journal article" date="2004" name="Nat. Genet.">
        <title>Complete sequencing and characterization of 21,243 full-length human cDNAs.</title>
        <authorList>
            <person name="Ota T."/>
            <person name="Suzuki Y."/>
            <person name="Nishikawa T."/>
            <person name="Otsuki T."/>
            <person name="Sugiyama T."/>
            <person name="Irie R."/>
            <person name="Wakamatsu A."/>
            <person name="Hayashi K."/>
            <person name="Sato H."/>
            <person name="Nagai K."/>
            <person name="Kimura K."/>
            <person name="Makita H."/>
            <person name="Sekine M."/>
            <person name="Obayashi M."/>
            <person name="Nishi T."/>
            <person name="Shibahara T."/>
            <person name="Tanaka T."/>
            <person name="Ishii S."/>
            <person name="Yamamoto J."/>
            <person name="Saito K."/>
            <person name="Kawai Y."/>
            <person name="Isono Y."/>
            <person name="Nakamura Y."/>
            <person name="Nagahari K."/>
            <person name="Murakami K."/>
            <person name="Yasuda T."/>
            <person name="Iwayanagi T."/>
            <person name="Wagatsuma M."/>
            <person name="Shiratori A."/>
            <person name="Sudo H."/>
            <person name="Hosoiri T."/>
            <person name="Kaku Y."/>
            <person name="Kodaira H."/>
            <person name="Kondo H."/>
            <person name="Sugawara M."/>
            <person name="Takahashi M."/>
            <person name="Kanda K."/>
            <person name="Yokoi T."/>
            <person name="Furuya T."/>
            <person name="Kikkawa E."/>
            <person name="Omura Y."/>
            <person name="Abe K."/>
            <person name="Kamihara K."/>
            <person name="Katsuta N."/>
            <person name="Sato K."/>
            <person name="Tanikawa M."/>
            <person name="Yamazaki M."/>
            <person name="Ninomiya K."/>
            <person name="Ishibashi T."/>
            <person name="Yamashita H."/>
            <person name="Murakawa K."/>
            <person name="Fujimori K."/>
            <person name="Tanai H."/>
            <person name="Kimata M."/>
            <person name="Watanabe M."/>
            <person name="Hiraoka S."/>
            <person name="Chiba Y."/>
            <person name="Ishida S."/>
            <person name="Ono Y."/>
            <person name="Takiguchi S."/>
            <person name="Watanabe S."/>
            <person name="Yosida M."/>
            <person name="Hotuta T."/>
            <person name="Kusano J."/>
            <person name="Kanehori K."/>
            <person name="Takahashi-Fujii A."/>
            <person name="Hara H."/>
            <person name="Tanase T.-O."/>
            <person name="Nomura Y."/>
            <person name="Togiya S."/>
            <person name="Komai F."/>
            <person name="Hara R."/>
            <person name="Takeuchi K."/>
            <person name="Arita M."/>
            <person name="Imose N."/>
            <person name="Musashino K."/>
            <person name="Yuuki H."/>
            <person name="Oshima A."/>
            <person name="Sasaki N."/>
            <person name="Aotsuka S."/>
            <person name="Yoshikawa Y."/>
            <person name="Matsunawa H."/>
            <person name="Ichihara T."/>
            <person name="Shiohata N."/>
            <person name="Sano S."/>
            <person name="Moriya S."/>
            <person name="Momiyama H."/>
            <person name="Satoh N."/>
            <person name="Takami S."/>
            <person name="Terashima Y."/>
            <person name="Suzuki O."/>
            <person name="Nakagawa S."/>
            <person name="Senoh A."/>
            <person name="Mizoguchi H."/>
            <person name="Goto Y."/>
            <person name="Shimizu F."/>
            <person name="Wakebe H."/>
            <person name="Hishigaki H."/>
            <person name="Watanabe T."/>
            <person name="Sugiyama A."/>
            <person name="Takemoto M."/>
            <person name="Kawakami B."/>
            <person name="Yamazaki M."/>
            <person name="Watanabe K."/>
            <person name="Kumagai A."/>
            <person name="Itakura S."/>
            <person name="Fukuzumi Y."/>
            <person name="Fujimori Y."/>
            <person name="Komiyama M."/>
            <person name="Tashiro H."/>
            <person name="Tanigami A."/>
            <person name="Fujiwara T."/>
            <person name="Ono T."/>
            <person name="Yamada K."/>
            <person name="Fujii Y."/>
            <person name="Ozaki K."/>
            <person name="Hirao M."/>
            <person name="Ohmori Y."/>
            <person name="Kawabata A."/>
            <person name="Hikiji T."/>
            <person name="Kobatake N."/>
            <person name="Inagaki H."/>
            <person name="Ikema Y."/>
            <person name="Okamoto S."/>
            <person name="Okitani R."/>
            <person name="Kawakami T."/>
            <person name="Noguchi S."/>
            <person name="Itoh T."/>
            <person name="Shigeta K."/>
            <person name="Senba T."/>
            <person name="Matsumura K."/>
            <person name="Nakajima Y."/>
            <person name="Mizuno T."/>
            <person name="Morinaga M."/>
            <person name="Sasaki M."/>
            <person name="Togashi T."/>
            <person name="Oyama M."/>
            <person name="Hata H."/>
            <person name="Watanabe M."/>
            <person name="Komatsu T."/>
            <person name="Mizushima-Sugano J."/>
            <person name="Satoh T."/>
            <person name="Shirai Y."/>
            <person name="Takahashi Y."/>
            <person name="Nakagawa K."/>
            <person name="Okumura K."/>
            <person name="Nagase T."/>
            <person name="Nomura N."/>
            <person name="Kikuchi H."/>
            <person name="Masuho Y."/>
            <person name="Yamashita R."/>
            <person name="Nakai K."/>
            <person name="Yada T."/>
            <person name="Nakamura Y."/>
            <person name="Ohara O."/>
            <person name="Isogai T."/>
            <person name="Sugano S."/>
        </authorList>
    </citation>
    <scope>NUCLEOTIDE SEQUENCE [LARGE SCALE MRNA]</scope>
</reference>
<reference key="8">
    <citation type="journal article" date="2006" name="Nature">
        <title>The DNA sequence and biological annotation of human chromosome 1.</title>
        <authorList>
            <person name="Gregory S.G."/>
            <person name="Barlow K.F."/>
            <person name="McLay K.E."/>
            <person name="Kaul R."/>
            <person name="Swarbreck D."/>
            <person name="Dunham A."/>
            <person name="Scott C.E."/>
            <person name="Howe K.L."/>
            <person name="Woodfine K."/>
            <person name="Spencer C.C.A."/>
            <person name="Jones M.C."/>
            <person name="Gillson C."/>
            <person name="Searle S."/>
            <person name="Zhou Y."/>
            <person name="Kokocinski F."/>
            <person name="McDonald L."/>
            <person name="Evans R."/>
            <person name="Phillips K."/>
            <person name="Atkinson A."/>
            <person name="Cooper R."/>
            <person name="Jones C."/>
            <person name="Hall R.E."/>
            <person name="Andrews T.D."/>
            <person name="Lloyd C."/>
            <person name="Ainscough R."/>
            <person name="Almeida J.P."/>
            <person name="Ambrose K.D."/>
            <person name="Anderson F."/>
            <person name="Andrew R.W."/>
            <person name="Ashwell R.I.S."/>
            <person name="Aubin K."/>
            <person name="Babbage A.K."/>
            <person name="Bagguley C.L."/>
            <person name="Bailey J."/>
            <person name="Beasley H."/>
            <person name="Bethel G."/>
            <person name="Bird C.P."/>
            <person name="Bray-Allen S."/>
            <person name="Brown J.Y."/>
            <person name="Brown A.J."/>
            <person name="Buckley D."/>
            <person name="Burton J."/>
            <person name="Bye J."/>
            <person name="Carder C."/>
            <person name="Chapman J.C."/>
            <person name="Clark S.Y."/>
            <person name="Clarke G."/>
            <person name="Clee C."/>
            <person name="Cobley V."/>
            <person name="Collier R.E."/>
            <person name="Corby N."/>
            <person name="Coville G.J."/>
            <person name="Davies J."/>
            <person name="Deadman R."/>
            <person name="Dunn M."/>
            <person name="Earthrowl M."/>
            <person name="Ellington A.G."/>
            <person name="Errington H."/>
            <person name="Frankish A."/>
            <person name="Frankland J."/>
            <person name="French L."/>
            <person name="Garner P."/>
            <person name="Garnett J."/>
            <person name="Gay L."/>
            <person name="Ghori M.R.J."/>
            <person name="Gibson R."/>
            <person name="Gilby L.M."/>
            <person name="Gillett W."/>
            <person name="Glithero R.J."/>
            <person name="Grafham D.V."/>
            <person name="Griffiths C."/>
            <person name="Griffiths-Jones S."/>
            <person name="Grocock R."/>
            <person name="Hammond S."/>
            <person name="Harrison E.S.I."/>
            <person name="Hart E."/>
            <person name="Haugen E."/>
            <person name="Heath P.D."/>
            <person name="Holmes S."/>
            <person name="Holt K."/>
            <person name="Howden P.J."/>
            <person name="Hunt A.R."/>
            <person name="Hunt S.E."/>
            <person name="Hunter G."/>
            <person name="Isherwood J."/>
            <person name="James R."/>
            <person name="Johnson C."/>
            <person name="Johnson D."/>
            <person name="Joy A."/>
            <person name="Kay M."/>
            <person name="Kershaw J.K."/>
            <person name="Kibukawa M."/>
            <person name="Kimberley A.M."/>
            <person name="King A."/>
            <person name="Knights A.J."/>
            <person name="Lad H."/>
            <person name="Laird G."/>
            <person name="Lawlor S."/>
            <person name="Leongamornlert D.A."/>
            <person name="Lloyd D.M."/>
            <person name="Loveland J."/>
            <person name="Lovell J."/>
            <person name="Lush M.J."/>
            <person name="Lyne R."/>
            <person name="Martin S."/>
            <person name="Mashreghi-Mohammadi M."/>
            <person name="Matthews L."/>
            <person name="Matthews N.S.W."/>
            <person name="McLaren S."/>
            <person name="Milne S."/>
            <person name="Mistry S."/>
            <person name="Moore M.J.F."/>
            <person name="Nickerson T."/>
            <person name="O'Dell C.N."/>
            <person name="Oliver K."/>
            <person name="Palmeiri A."/>
            <person name="Palmer S.A."/>
            <person name="Parker A."/>
            <person name="Patel D."/>
            <person name="Pearce A.V."/>
            <person name="Peck A.I."/>
            <person name="Pelan S."/>
            <person name="Phelps K."/>
            <person name="Phillimore B.J."/>
            <person name="Plumb R."/>
            <person name="Rajan J."/>
            <person name="Raymond C."/>
            <person name="Rouse G."/>
            <person name="Saenphimmachak C."/>
            <person name="Sehra H.K."/>
            <person name="Sheridan E."/>
            <person name="Shownkeen R."/>
            <person name="Sims S."/>
            <person name="Skuce C.D."/>
            <person name="Smith M."/>
            <person name="Steward C."/>
            <person name="Subramanian S."/>
            <person name="Sycamore N."/>
            <person name="Tracey A."/>
            <person name="Tromans A."/>
            <person name="Van Helmond Z."/>
            <person name="Wall M."/>
            <person name="Wallis J.M."/>
            <person name="White S."/>
            <person name="Whitehead S.L."/>
            <person name="Wilkinson J.E."/>
            <person name="Willey D.L."/>
            <person name="Williams H."/>
            <person name="Wilming L."/>
            <person name="Wray P.W."/>
            <person name="Wu Z."/>
            <person name="Coulson A."/>
            <person name="Vaudin M."/>
            <person name="Sulston J.E."/>
            <person name="Durbin R.M."/>
            <person name="Hubbard T."/>
            <person name="Wooster R."/>
            <person name="Dunham I."/>
            <person name="Carter N.P."/>
            <person name="McVean G."/>
            <person name="Ross M.T."/>
            <person name="Harrow J."/>
            <person name="Olson M.V."/>
            <person name="Beck S."/>
            <person name="Rogers J."/>
            <person name="Bentley D.R."/>
        </authorList>
    </citation>
    <scope>NUCLEOTIDE SEQUENCE [LARGE SCALE GENOMIC DNA]</scope>
</reference>
<reference key="9">
    <citation type="journal article" date="2004" name="Genome Res.">
        <title>The status, quality, and expansion of the NIH full-length cDNA project: the Mammalian Gene Collection (MGC).</title>
        <authorList>
            <consortium name="The MGC Project Team"/>
        </authorList>
    </citation>
    <scope>NUCLEOTIDE SEQUENCE [LARGE SCALE MRNA]</scope>
    <source>
        <tissue>Skeletal muscle</tissue>
    </source>
</reference>
<feature type="initiator methionine" description="Removed" evidence="1">
    <location>
        <position position="1"/>
    </location>
</feature>
<feature type="chain" id="PRO_0000186139" description="Troponin I, slow skeletal muscle">
    <location>
        <begin position="2"/>
        <end position="187"/>
    </location>
</feature>
<feature type="region of interest" description="Involved in binding TNC">
    <location>
        <begin position="2"/>
        <end position="48"/>
    </location>
</feature>
<feature type="region of interest" description="Involved in binding TNC and actin">
    <location>
        <begin position="97"/>
        <end position="118"/>
    </location>
</feature>
<feature type="modified residue" description="N-acetylproline" evidence="1">
    <location>
        <position position="2"/>
    </location>
</feature>
<feature type="modified residue" description="Phosphoserine" evidence="2">
    <location>
        <position position="58"/>
    </location>
</feature>
<feature type="sequence variant" id="VAR_052403" description="In dbSNP:rs2296695.">
    <original>R</original>
    <variation>W</variation>
    <location>
        <position position="67"/>
    </location>
</feature>
<feature type="sequence conflict" description="In Ref. 8; AC096677." evidence="5" ref="8">
    <original>VE</original>
    <variation>FQ</variation>
    <location>
        <begin position="4"/>
        <end position="5"/>
    </location>
</feature>
<feature type="sequence conflict" description="In Ref. 4; CAG29297." evidence="5" ref="4">
    <original>W</original>
    <variation>R</variation>
    <location>
        <position position="30"/>
    </location>
</feature>
<feature type="sequence conflict" description="In Ref. 5; CAD91135." evidence="5" ref="5">
    <original>D</original>
    <variation>A</variation>
    <location>
        <position position="103"/>
    </location>
</feature>
<feature type="sequence conflict" description="In Ref. 3; CAC44240." evidence="5" ref="3">
    <original>K</original>
    <variation>R</variation>
    <location>
        <position position="131"/>
    </location>
</feature>
<feature type="sequence conflict" description="In Ref. 4; CAG46793." evidence="5" ref="4">
    <original>K</original>
    <variation>T</variation>
    <location>
        <position position="143"/>
    </location>
</feature>
<feature type="sequence conflict" description="In Ref. 1; AAA61228 and 4; CAG46827/CAG46793/CAG29297." evidence="5" ref="1 4">
    <original>KS</original>
    <variation>NA</variation>
    <location>
        <begin position="182"/>
        <end position="183"/>
    </location>
</feature>
<proteinExistence type="evidence at protein level"/>
<protein>
    <recommendedName>
        <fullName>Troponin I, slow skeletal muscle</fullName>
    </recommendedName>
    <alternativeName>
        <fullName>Troponin I, slow-twitch isoform</fullName>
    </alternativeName>
</protein>
<gene>
    <name type="primary">TNNI1</name>
</gene>
<evidence type="ECO:0000250" key="1">
    <source>
        <dbReference type="UniProtKB" id="P02645"/>
    </source>
</evidence>
<evidence type="ECO:0000250" key="2">
    <source>
        <dbReference type="UniProtKB" id="Q9WUZ5"/>
    </source>
</evidence>
<evidence type="ECO:0000269" key="3">
    <source>
    </source>
</evidence>
<evidence type="ECO:0000269" key="4">
    <source>
    </source>
</evidence>
<evidence type="ECO:0000305" key="5"/>
<dbReference type="EMBL" id="J04760">
    <property type="protein sequence ID" value="AAA61228.1"/>
    <property type="molecule type" value="mRNA"/>
</dbReference>
<dbReference type="EMBL" id="L21910">
    <property type="protein sequence ID" value="AAC14461.1"/>
    <property type="molecule type" value="Genomic_DNA"/>
</dbReference>
<dbReference type="EMBL" id="L21906">
    <property type="protein sequence ID" value="AAC14461.1"/>
    <property type="status" value="JOINED"/>
    <property type="molecule type" value="Genomic_DNA"/>
</dbReference>
<dbReference type="EMBL" id="L21908">
    <property type="protein sequence ID" value="AAC14461.1"/>
    <property type="status" value="JOINED"/>
    <property type="molecule type" value="Genomic_DNA"/>
</dbReference>
<dbReference type="EMBL" id="L21909">
    <property type="protein sequence ID" value="AAC14461.1"/>
    <property type="status" value="JOINED"/>
    <property type="molecule type" value="Genomic_DNA"/>
</dbReference>
<dbReference type="EMBL" id="AJ315823">
    <property type="protein sequence ID" value="CAC44240.1"/>
    <property type="molecule type" value="mRNA"/>
</dbReference>
<dbReference type="EMBL" id="CR450301">
    <property type="protein sequence ID" value="CAG29297.1"/>
    <property type="molecule type" value="mRNA"/>
</dbReference>
<dbReference type="EMBL" id="CR541996">
    <property type="protein sequence ID" value="CAG46793.1"/>
    <property type="molecule type" value="mRNA"/>
</dbReference>
<dbReference type="EMBL" id="CR542030">
    <property type="protein sequence ID" value="CAG46827.1"/>
    <property type="molecule type" value="mRNA"/>
</dbReference>
<dbReference type="EMBL" id="AL831820">
    <property type="protein sequence ID" value="CAD38534.1"/>
    <property type="molecule type" value="mRNA"/>
</dbReference>
<dbReference type="EMBL" id="AL831975">
    <property type="protein sequence ID" value="CAH56221.1"/>
    <property type="molecule type" value="mRNA"/>
</dbReference>
<dbReference type="EMBL" id="BX510903">
    <property type="protein sequence ID" value="CAD91135.1"/>
    <property type="molecule type" value="mRNA"/>
</dbReference>
<dbReference type="EMBL" id="AK223588">
    <property type="protein sequence ID" value="BAD97308.1"/>
    <property type="molecule type" value="mRNA"/>
</dbReference>
<dbReference type="EMBL" id="AK311896">
    <property type="protein sequence ID" value="BAG34837.1"/>
    <property type="molecule type" value="mRNA"/>
</dbReference>
<dbReference type="EMBL" id="AC096677">
    <property type="status" value="NOT_ANNOTATED_CDS"/>
    <property type="molecule type" value="Genomic_DNA"/>
</dbReference>
<dbReference type="EMBL" id="BC012600">
    <property type="protein sequence ID" value="AAH12600.1"/>
    <property type="molecule type" value="mRNA"/>
</dbReference>
<dbReference type="EMBL" id="BC012601">
    <property type="protein sequence ID" value="AAH12601.1"/>
    <property type="molecule type" value="mRNA"/>
</dbReference>
<dbReference type="CCDS" id="CCDS1411.1"/>
<dbReference type="PIR" id="A53740">
    <property type="entry name" value="TPHUIW"/>
</dbReference>
<dbReference type="RefSeq" id="NP_003272.3">
    <property type="nucleotide sequence ID" value="NM_003281.3"/>
</dbReference>
<dbReference type="SMR" id="P19237"/>
<dbReference type="BioGRID" id="112989">
    <property type="interactions" value="53"/>
</dbReference>
<dbReference type="FunCoup" id="P19237">
    <property type="interactions" value="42"/>
</dbReference>
<dbReference type="IntAct" id="P19237">
    <property type="interactions" value="42"/>
</dbReference>
<dbReference type="STRING" id="9606.ENSP00000354488"/>
<dbReference type="iPTMnet" id="P19237"/>
<dbReference type="PhosphoSitePlus" id="P19237"/>
<dbReference type="BioMuta" id="TNNI1"/>
<dbReference type="DMDM" id="1351298"/>
<dbReference type="MassIVE" id="P19237"/>
<dbReference type="PaxDb" id="9606-ENSP00000354488"/>
<dbReference type="PeptideAtlas" id="P19237"/>
<dbReference type="ProteomicsDB" id="53641"/>
<dbReference type="Antibodypedia" id="3993">
    <property type="antibodies" value="385 antibodies from 29 providers"/>
</dbReference>
<dbReference type="DNASU" id="7135"/>
<dbReference type="Ensembl" id="ENST00000336092.8">
    <property type="protein sequence ID" value="ENSP00000337022.4"/>
    <property type="gene ID" value="ENSG00000159173.20"/>
</dbReference>
<dbReference type="Ensembl" id="ENST00000361379.9">
    <property type="protein sequence ID" value="ENSP00000354488.4"/>
    <property type="gene ID" value="ENSG00000159173.20"/>
</dbReference>
<dbReference type="Ensembl" id="ENST00000367312.5">
    <property type="protein sequence ID" value="ENSP00000356281.1"/>
    <property type="gene ID" value="ENSG00000159173.20"/>
</dbReference>
<dbReference type="GeneID" id="7135"/>
<dbReference type="KEGG" id="hsa:7135"/>
<dbReference type="MANE-Select" id="ENST00000361379.9">
    <property type="protein sequence ID" value="ENSP00000354488.4"/>
    <property type="RefSeq nucleotide sequence ID" value="NM_003281.4"/>
    <property type="RefSeq protein sequence ID" value="NP_003272.3"/>
</dbReference>
<dbReference type="UCSC" id="uc057oib.1">
    <property type="organism name" value="human"/>
</dbReference>
<dbReference type="AGR" id="HGNC:11945"/>
<dbReference type="CTD" id="7135"/>
<dbReference type="DisGeNET" id="7135"/>
<dbReference type="GeneCards" id="TNNI1"/>
<dbReference type="HGNC" id="HGNC:11945">
    <property type="gene designation" value="TNNI1"/>
</dbReference>
<dbReference type="HPA" id="ENSG00000159173">
    <property type="expression patterns" value="Group enriched (skeletal muscle, tongue)"/>
</dbReference>
<dbReference type="MalaCards" id="TNNI1"/>
<dbReference type="MIM" id="191042">
    <property type="type" value="gene"/>
</dbReference>
<dbReference type="neXtProt" id="NX_P19237"/>
<dbReference type="OpenTargets" id="ENSG00000159173"/>
<dbReference type="PharmGKB" id="PA36634"/>
<dbReference type="VEuPathDB" id="HostDB:ENSG00000159173"/>
<dbReference type="eggNOG" id="KOG3977">
    <property type="taxonomic scope" value="Eukaryota"/>
</dbReference>
<dbReference type="GeneTree" id="ENSGT01030000234588"/>
<dbReference type="InParanoid" id="P19237"/>
<dbReference type="OMA" id="KQDFRAN"/>
<dbReference type="OrthoDB" id="371899at2759"/>
<dbReference type="PAN-GO" id="P19237">
    <property type="GO annotations" value="3 GO annotations based on evolutionary models"/>
</dbReference>
<dbReference type="PhylomeDB" id="P19237"/>
<dbReference type="TreeFam" id="TF313374"/>
<dbReference type="PathwayCommons" id="P19237"/>
<dbReference type="Reactome" id="R-HSA-390522">
    <property type="pathway name" value="Striated Muscle Contraction"/>
</dbReference>
<dbReference type="SignaLink" id="P19237"/>
<dbReference type="SIGNOR" id="P19237"/>
<dbReference type="BioGRID-ORCS" id="7135">
    <property type="hits" value="9 hits in 1141 CRISPR screens"/>
</dbReference>
<dbReference type="ChiTaRS" id="TNNI1">
    <property type="organism name" value="human"/>
</dbReference>
<dbReference type="GeneWiki" id="TNNI1"/>
<dbReference type="GenomeRNAi" id="7135"/>
<dbReference type="Pharos" id="P19237">
    <property type="development level" value="Tbio"/>
</dbReference>
<dbReference type="PRO" id="PR:P19237"/>
<dbReference type="Proteomes" id="UP000005640">
    <property type="component" value="Chromosome 1"/>
</dbReference>
<dbReference type="RNAct" id="P19237">
    <property type="molecule type" value="protein"/>
</dbReference>
<dbReference type="Bgee" id="ENSG00000159173">
    <property type="expression patterns" value="Expressed in skeletal muscle tissue of rectus abdominis and 124 other cell types or tissues"/>
</dbReference>
<dbReference type="ExpressionAtlas" id="P19237">
    <property type="expression patterns" value="baseline and differential"/>
</dbReference>
<dbReference type="GO" id="GO:0005829">
    <property type="term" value="C:cytosol"/>
    <property type="evidence" value="ECO:0000304"/>
    <property type="project" value="Reactome"/>
</dbReference>
<dbReference type="GO" id="GO:0005861">
    <property type="term" value="C:troponin complex"/>
    <property type="evidence" value="ECO:0000318"/>
    <property type="project" value="GO_Central"/>
</dbReference>
<dbReference type="GO" id="GO:0003779">
    <property type="term" value="F:actin binding"/>
    <property type="evidence" value="ECO:0007669"/>
    <property type="project" value="UniProtKB-KW"/>
</dbReference>
<dbReference type="GO" id="GO:0060048">
    <property type="term" value="P:cardiac muscle contraction"/>
    <property type="evidence" value="ECO:0000318"/>
    <property type="project" value="GO_Central"/>
</dbReference>
<dbReference type="GO" id="GO:0006942">
    <property type="term" value="P:regulation of striated muscle contraction"/>
    <property type="evidence" value="ECO:0000303"/>
    <property type="project" value="UniProtKB"/>
</dbReference>
<dbReference type="GO" id="GO:0003009">
    <property type="term" value="P:skeletal muscle contraction"/>
    <property type="evidence" value="ECO:0000318"/>
    <property type="project" value="GO_Central"/>
</dbReference>
<dbReference type="GO" id="GO:0014883">
    <property type="term" value="P:transition between fast and slow fiber"/>
    <property type="evidence" value="ECO:0007669"/>
    <property type="project" value="Ensembl"/>
</dbReference>
<dbReference type="GO" id="GO:0055010">
    <property type="term" value="P:ventricular cardiac muscle tissue morphogenesis"/>
    <property type="evidence" value="ECO:0007669"/>
    <property type="project" value="Ensembl"/>
</dbReference>
<dbReference type="FunFam" id="1.20.5.350:FF:000002">
    <property type="entry name" value="troponin I, fast skeletal muscle"/>
    <property type="match status" value="1"/>
</dbReference>
<dbReference type="Gene3D" id="1.20.5.350">
    <property type="match status" value="1"/>
</dbReference>
<dbReference type="Gene3D" id="6.10.250.180">
    <property type="match status" value="1"/>
</dbReference>
<dbReference type="InterPro" id="IPR001978">
    <property type="entry name" value="Troponin"/>
</dbReference>
<dbReference type="InterPro" id="IPR050875">
    <property type="entry name" value="Troponin_I"/>
</dbReference>
<dbReference type="InterPro" id="IPR038077">
    <property type="entry name" value="Troponin_sf"/>
</dbReference>
<dbReference type="PANTHER" id="PTHR13738">
    <property type="entry name" value="TROPONIN I"/>
    <property type="match status" value="1"/>
</dbReference>
<dbReference type="PANTHER" id="PTHR13738:SF9">
    <property type="entry name" value="TROPONIN I, SLOW SKELETAL MUSCLE"/>
    <property type="match status" value="1"/>
</dbReference>
<dbReference type="Pfam" id="PF00992">
    <property type="entry name" value="Troponin"/>
    <property type="match status" value="1"/>
</dbReference>
<dbReference type="SUPFAM" id="SSF90250">
    <property type="entry name" value="Troponin coil-coiled subunits"/>
    <property type="match status" value="1"/>
</dbReference>
<organism>
    <name type="scientific">Homo sapiens</name>
    <name type="common">Human</name>
    <dbReference type="NCBI Taxonomy" id="9606"/>
    <lineage>
        <taxon>Eukaryota</taxon>
        <taxon>Metazoa</taxon>
        <taxon>Chordata</taxon>
        <taxon>Craniata</taxon>
        <taxon>Vertebrata</taxon>
        <taxon>Euteleostomi</taxon>
        <taxon>Mammalia</taxon>
        <taxon>Eutheria</taxon>
        <taxon>Euarchontoglires</taxon>
        <taxon>Primates</taxon>
        <taxon>Haplorrhini</taxon>
        <taxon>Catarrhini</taxon>
        <taxon>Hominidae</taxon>
        <taxon>Homo</taxon>
    </lineage>
</organism>
<name>TNNI1_HUMAN</name>
<accession>P19237</accession>
<accession>A6NEH3</accession>
<accession>A8MSJ0</accession>
<accession>Q659A5</accession>
<accession>Q6FGS7</accession>
<accession>Q6FGW1</accession>
<accession>Q6ICU2</accession>
<accession>Q86T57</accession>
<accession>Q96DT9</accession>
<sequence length="187" mass="21692">MPEVERKPKITASRKLLLKSLMLAKAKECWEQEHEEREAEKVRYLAERIPTLQTRGLSLSALQDLCRELHAKVEVVDEERYDIEAKCLHNTREIKDLKLKVMDLRGKFKRPPLRRVRVSADAMLRALLGSKHKVSMDLRANLKSVKKEDTEKERPVEVGDWRKNVEAMSGMEGRKKMFDAAKSPTSQ</sequence>
<comment type="function">
    <text>Troponin I is the inhibitory subunit of troponin, the thin filament regulatory complex which confers calcium-sensitivity to striated muscle actomyosin ATPase activity.</text>
</comment>
<comment type="subunit">
    <text>Binds to actin and tropomyosin.</text>
</comment>
<comment type="interaction">
    <interactant intactId="EBI-746692">
        <id>P19237</id>
    </interactant>
    <interactant intactId="EBI-17183751">
        <id>X5D778</id>
        <label>ANKRD11</label>
    </interactant>
    <organismsDiffer>false</organismsDiffer>
    <experiments>3</experiments>
</comment>
<comment type="interaction">
    <interactant intactId="EBI-746692">
        <id>P19237</id>
    </interactant>
    <interactant intactId="EBI-742909">
        <id>Q9H6L4</id>
        <label>ARMC7</label>
    </interactant>
    <organismsDiffer>false</organismsDiffer>
    <experiments>3</experiments>
</comment>
<comment type="interaction">
    <interactant intactId="EBI-746692">
        <id>P19237</id>
    </interactant>
    <interactant intactId="EBI-11603468">
        <id>Q2NKX9</id>
        <label>C2orf68</label>
    </interactant>
    <organismsDiffer>false</organismsDiffer>
    <experiments>3</experiments>
</comment>
<comment type="interaction">
    <interactant intactId="EBI-746692">
        <id>P19237</id>
    </interactant>
    <interactant intactId="EBI-12011224">
        <id>Q9NPB3</id>
        <label>CABP2</label>
    </interactant>
    <organismsDiffer>false</organismsDiffer>
    <experiments>3</experiments>
</comment>
<comment type="interaction">
    <interactant intactId="EBI-746692">
        <id>P19237</id>
    </interactant>
    <interactant intactId="EBI-10311131">
        <id>Q9NP86</id>
        <label>CABP5</label>
    </interactant>
    <organismsDiffer>false</organismsDiffer>
    <experiments>3</experiments>
</comment>
<comment type="interaction">
    <interactant intactId="EBI-746692">
        <id>P19237</id>
    </interactant>
    <interactant intactId="EBI-10171570">
        <id>Q68D86</id>
        <label>CCDC102B</label>
    </interactant>
    <organismsDiffer>false</organismsDiffer>
    <experiments>3</experiments>
</comment>
<comment type="interaction">
    <interactant intactId="EBI-746692">
        <id>P19237</id>
    </interactant>
    <interactant intactId="EBI-10961624">
        <id>Q2TAC2-2</id>
        <label>CCDC57</label>
    </interactant>
    <organismsDiffer>false</organismsDiffer>
    <experiments>3</experiments>
</comment>
<comment type="interaction">
    <interactant intactId="EBI-746692">
        <id>P19237</id>
    </interactant>
    <interactant intactId="EBI-5278764">
        <id>Q96GN5</id>
        <label>CDCA7L</label>
    </interactant>
    <organismsDiffer>false</organismsDiffer>
    <experiments>3</experiments>
</comment>
<comment type="interaction">
    <interactant intactId="EBI-746692">
        <id>P19237</id>
    </interactant>
    <interactant intactId="EBI-741885">
        <id>Q96LK0</id>
        <label>CEP19</label>
    </interactant>
    <organismsDiffer>false</organismsDiffer>
    <experiments>3</experiments>
</comment>
<comment type="interaction">
    <interactant intactId="EBI-746692">
        <id>P19237</id>
    </interactant>
    <interactant intactId="EBI-712959">
        <id>O15182</id>
        <label>CETN3</label>
    </interactant>
    <organismsDiffer>false</organismsDiffer>
    <experiments>3</experiments>
</comment>
<comment type="interaction">
    <interactant intactId="EBI-746692">
        <id>P19237</id>
    </interactant>
    <interactant intactId="EBI-11962928">
        <id>Q9UI47-2</id>
        <label>CTNNA3</label>
    </interactant>
    <organismsDiffer>false</organismsDiffer>
    <experiments>3</experiments>
</comment>
<comment type="interaction">
    <interactant intactId="EBI-746692">
        <id>P19237</id>
    </interactant>
    <interactant intactId="EBI-2213388">
        <id>Q8TEB1</id>
        <label>DCAF11</label>
    </interactant>
    <organismsDiffer>false</organismsDiffer>
    <experiments>3</experiments>
</comment>
<comment type="interaction">
    <interactant intactId="EBI-746692">
        <id>P19237</id>
    </interactant>
    <interactant intactId="EBI-769261">
        <id>Q96JC9</id>
        <label>EAF1</label>
    </interactant>
    <organismsDiffer>false</organismsDiffer>
    <experiments>3</experiments>
</comment>
<comment type="interaction">
    <interactant intactId="EBI-746692">
        <id>P19237</id>
    </interactant>
    <interactant intactId="EBI-13317131">
        <id>Q5VUJ9-2</id>
        <label>EFCAB2</label>
    </interactant>
    <organismsDiffer>false</organismsDiffer>
    <experiments>3</experiments>
</comment>
<comment type="interaction">
    <interactant intactId="EBI-746692">
        <id>P19237</id>
    </interactant>
    <interactant intactId="EBI-750700">
        <id>Q8N9N8</id>
        <label>EIF1AD</label>
    </interactant>
    <organismsDiffer>false</organismsDiffer>
    <experiments>3</experiments>
</comment>
<comment type="interaction">
    <interactant intactId="EBI-746692">
        <id>P19237</id>
    </interactant>
    <interactant intactId="EBI-744099">
        <id>Q9H0I2</id>
        <label>ENKD1</label>
    </interactant>
    <organismsDiffer>false</organismsDiffer>
    <experiments>3</experiments>
</comment>
<comment type="interaction">
    <interactant intactId="EBI-746692">
        <id>P19237</id>
    </interactant>
    <interactant intactId="EBI-12001340">
        <id>P62508-3</id>
        <label>ESRRG</label>
    </interactant>
    <organismsDiffer>false</organismsDiffer>
    <experiments>3</experiments>
</comment>
<comment type="interaction">
    <interactant intactId="EBI-746692">
        <id>P19237</id>
    </interactant>
    <interactant intactId="EBI-14069005">
        <id>Q9BVG8-5</id>
        <label>KIFC3</label>
    </interactant>
    <organismsDiffer>false</organismsDiffer>
    <experiments>3</experiments>
</comment>
<comment type="interaction">
    <interactant intactId="EBI-746692">
        <id>P19237</id>
    </interactant>
    <interactant intactId="EBI-739909">
        <id>Q969R5</id>
        <label>L3MBTL2</label>
    </interactant>
    <organismsDiffer>false</organismsDiffer>
    <experiments>3</experiments>
</comment>
<comment type="interaction">
    <interactant intactId="EBI-746692">
        <id>P19237</id>
    </interactant>
    <interactant intactId="EBI-11978579">
        <id>O95983-2</id>
        <label>MBD3</label>
    </interactant>
    <organismsDiffer>false</organismsDiffer>
    <experiments>3</experiments>
</comment>
<comment type="interaction">
    <interactant intactId="EBI-746692">
        <id>P19237</id>
    </interactant>
    <interactant intactId="EBI-348259">
        <id>Q96EZ8</id>
        <label>MCRS1</label>
    </interactant>
    <organismsDiffer>false</organismsDiffer>
    <experiments>3</experiments>
</comment>
<comment type="interaction">
    <interactant intactId="EBI-746692">
        <id>P19237</id>
    </interactant>
    <interactant intactId="EBI-724076">
        <id>Q99750</id>
        <label>MDFI</label>
    </interactant>
    <organismsDiffer>false</organismsDiffer>
    <experiments>3</experiments>
</comment>
<comment type="interaction">
    <interactant intactId="EBI-746692">
        <id>P19237</id>
    </interactant>
    <interactant intactId="EBI-1048159">
        <id>P55081</id>
        <label>MFAP1</label>
    </interactant>
    <organismsDiffer>false</organismsDiffer>
    <experiments>3</experiments>
</comment>
<comment type="interaction">
    <interactant intactId="EBI-746692">
        <id>P19237</id>
    </interactant>
    <interactant intactId="EBI-743811">
        <id>Q8NEH6</id>
        <label>MNS1</label>
    </interactant>
    <organismsDiffer>false</organismsDiffer>
    <experiments>3</experiments>
</comment>
<comment type="interaction">
    <interactant intactId="EBI-746692">
        <id>P19237</id>
    </interactant>
    <interactant intactId="EBI-11522433">
        <id>Q5JR59-3</id>
        <label>MTUS2</label>
    </interactant>
    <organismsDiffer>false</organismsDiffer>
    <experiments>3</experiments>
</comment>
<comment type="interaction">
    <interactant intactId="EBI-746692">
        <id>P19237</id>
    </interactant>
    <interactant intactId="EBI-10232538">
        <id>Q8WWB5</id>
        <label>PIH1D2</label>
    </interactant>
    <organismsDiffer>false</organismsDiffer>
    <experiments>3</experiments>
</comment>
<comment type="interaction">
    <interactant intactId="EBI-746692">
        <id>P19237</id>
    </interactant>
    <interactant intactId="EBI-79893">
        <id>Q92569</id>
        <label>PIK3R3</label>
    </interactant>
    <organismsDiffer>false</organismsDiffer>
    <experiments>3</experiments>
</comment>
<comment type="interaction">
    <interactant intactId="EBI-746692">
        <id>P19237</id>
    </interactant>
    <interactant intactId="EBI-302345">
        <id>Q8ND90</id>
        <label>PNMA1</label>
    </interactant>
    <organismsDiffer>false</organismsDiffer>
    <experiments>6</experiments>
</comment>
<comment type="interaction">
    <interactant intactId="EBI-746692">
        <id>P19237</id>
    </interactant>
    <interactant intactId="EBI-1055079">
        <id>O15160</id>
        <label>POLR1C</label>
    </interactant>
    <organismsDiffer>false</organismsDiffer>
    <experiments>3</experiments>
</comment>
<comment type="interaction">
    <interactant intactId="EBI-746692">
        <id>P19237</id>
    </interactant>
    <interactant intactId="EBI-1053424">
        <id>O43741</id>
        <label>PRKAB2</label>
    </interactant>
    <organismsDiffer>false</organismsDiffer>
    <experiments>3</experiments>
</comment>
<comment type="interaction">
    <interactant intactId="EBI-746692">
        <id>P19237</id>
    </interactant>
    <interactant intactId="EBI-711613">
        <id>P21673</id>
        <label>SAT1</label>
    </interactant>
    <organismsDiffer>false</organismsDiffer>
    <experiments>3</experiments>
</comment>
<comment type="interaction">
    <interactant intactId="EBI-746692">
        <id>P19237</id>
    </interactant>
    <interactant intactId="EBI-748391">
        <id>Q9BWG6</id>
        <label>SCNM1</label>
    </interactant>
    <organismsDiffer>false</organismsDiffer>
    <experiments>3</experiments>
</comment>
<comment type="interaction">
    <interactant intactId="EBI-746692">
        <id>P19237</id>
    </interactant>
    <interactant intactId="EBI-12023934">
        <id>Q5MJ10</id>
        <label>SPANXN2</label>
    </interactant>
    <organismsDiffer>false</organismsDiffer>
    <experiments>3</experiments>
</comment>
<comment type="interaction">
    <interactant intactId="EBI-746692">
        <id>P19237</id>
    </interactant>
    <interactant intactId="EBI-3906339">
        <id>P63316</id>
        <label>TNNC1</label>
    </interactant>
    <organismsDiffer>false</organismsDiffer>
    <experiments>5</experiments>
</comment>
<comment type="interaction">
    <interactant intactId="EBI-746692">
        <id>P19237</id>
    </interactant>
    <interactant intactId="EBI-12151635">
        <id>P13805-3</id>
        <label>TNNT1</label>
    </interactant>
    <organismsDiffer>false</organismsDiffer>
    <experiments>3</experiments>
</comment>
<comment type="interaction">
    <interactant intactId="EBI-746692">
        <id>P19237</id>
    </interactant>
    <interactant intactId="EBI-17559309">
        <id>P45379-11</id>
        <label>TNNT2</label>
    </interactant>
    <organismsDiffer>false</organismsDiffer>
    <experiments>3</experiments>
</comment>
<comment type="interaction">
    <interactant intactId="EBI-746692">
        <id>P19237</id>
    </interactant>
    <interactant intactId="EBI-355607">
        <id>P06753</id>
        <label>TPM3</label>
    </interactant>
    <organismsDiffer>false</organismsDiffer>
    <experiments>3</experiments>
</comment>
<comment type="interaction">
    <interactant intactId="EBI-746692">
        <id>P19237</id>
    </interactant>
    <interactant intactId="EBI-725997">
        <id>Q8WV44</id>
        <label>TRIM41</label>
    </interactant>
    <organismsDiffer>false</organismsDiffer>
    <experiments>3</experiments>
</comment>
<comment type="interaction">
    <interactant intactId="EBI-746692">
        <id>P19237</id>
    </interactant>
    <interactant intactId="EBI-2511991">
        <id>Q9Y2K6</id>
        <label>USP20</label>
    </interactant>
    <organismsDiffer>false</organismsDiffer>
    <experiments>3</experiments>
</comment>
<comment type="interaction">
    <interactant intactId="EBI-746692">
        <id>P19237</id>
    </interactant>
    <interactant intactId="EBI-7254550">
        <id>P36508</id>
        <label>ZNF76</label>
    </interactant>
    <organismsDiffer>false</organismsDiffer>
    <experiments>3</experiments>
</comment>
<comment type="tissue specificity">
    <text evidence="3 4">Highest levels observed in human skeletal muscle (e.g. gastrocnemious muscle), differentiated cultures of primary human muscle cells and rhabdomyosarcoma cells cultured in low serum medium. Expressed in C2 muscle cell myoblasts and myotubes.</text>
</comment>
<comment type="similarity">
    <text evidence="5">Belongs to the troponin I family.</text>
</comment>